<protein>
    <recommendedName>
        <fullName>Putative protein CLUHP3</fullName>
    </recommendedName>
    <alternativeName>
        <fullName>Clustered mitochondria (cluA/CLU1) homolog pseudogene 3</fullName>
    </alternativeName>
    <alternativeName>
        <fullName>KIAA0664-like protein 3</fullName>
    </alternativeName>
</protein>
<name>CLUP3_HUMAN</name>
<reference key="1">
    <citation type="journal article" date="2004" name="Nat. Genet.">
        <title>Complete sequencing and characterization of 21,243 full-length human cDNAs.</title>
        <authorList>
            <person name="Ota T."/>
            <person name="Suzuki Y."/>
            <person name="Nishikawa T."/>
            <person name="Otsuki T."/>
            <person name="Sugiyama T."/>
            <person name="Irie R."/>
            <person name="Wakamatsu A."/>
            <person name="Hayashi K."/>
            <person name="Sato H."/>
            <person name="Nagai K."/>
            <person name="Kimura K."/>
            <person name="Makita H."/>
            <person name="Sekine M."/>
            <person name="Obayashi M."/>
            <person name="Nishi T."/>
            <person name="Shibahara T."/>
            <person name="Tanaka T."/>
            <person name="Ishii S."/>
            <person name="Yamamoto J."/>
            <person name="Saito K."/>
            <person name="Kawai Y."/>
            <person name="Isono Y."/>
            <person name="Nakamura Y."/>
            <person name="Nagahari K."/>
            <person name="Murakami K."/>
            <person name="Yasuda T."/>
            <person name="Iwayanagi T."/>
            <person name="Wagatsuma M."/>
            <person name="Shiratori A."/>
            <person name="Sudo H."/>
            <person name="Hosoiri T."/>
            <person name="Kaku Y."/>
            <person name="Kodaira H."/>
            <person name="Kondo H."/>
            <person name="Sugawara M."/>
            <person name="Takahashi M."/>
            <person name="Kanda K."/>
            <person name="Yokoi T."/>
            <person name="Furuya T."/>
            <person name="Kikkawa E."/>
            <person name="Omura Y."/>
            <person name="Abe K."/>
            <person name="Kamihara K."/>
            <person name="Katsuta N."/>
            <person name="Sato K."/>
            <person name="Tanikawa M."/>
            <person name="Yamazaki M."/>
            <person name="Ninomiya K."/>
            <person name="Ishibashi T."/>
            <person name="Yamashita H."/>
            <person name="Murakawa K."/>
            <person name="Fujimori K."/>
            <person name="Tanai H."/>
            <person name="Kimata M."/>
            <person name="Watanabe M."/>
            <person name="Hiraoka S."/>
            <person name="Chiba Y."/>
            <person name="Ishida S."/>
            <person name="Ono Y."/>
            <person name="Takiguchi S."/>
            <person name="Watanabe S."/>
            <person name="Yosida M."/>
            <person name="Hotuta T."/>
            <person name="Kusano J."/>
            <person name="Kanehori K."/>
            <person name="Takahashi-Fujii A."/>
            <person name="Hara H."/>
            <person name="Tanase T.-O."/>
            <person name="Nomura Y."/>
            <person name="Togiya S."/>
            <person name="Komai F."/>
            <person name="Hara R."/>
            <person name="Takeuchi K."/>
            <person name="Arita M."/>
            <person name="Imose N."/>
            <person name="Musashino K."/>
            <person name="Yuuki H."/>
            <person name="Oshima A."/>
            <person name="Sasaki N."/>
            <person name="Aotsuka S."/>
            <person name="Yoshikawa Y."/>
            <person name="Matsunawa H."/>
            <person name="Ichihara T."/>
            <person name="Shiohata N."/>
            <person name="Sano S."/>
            <person name="Moriya S."/>
            <person name="Momiyama H."/>
            <person name="Satoh N."/>
            <person name="Takami S."/>
            <person name="Terashima Y."/>
            <person name="Suzuki O."/>
            <person name="Nakagawa S."/>
            <person name="Senoh A."/>
            <person name="Mizoguchi H."/>
            <person name="Goto Y."/>
            <person name="Shimizu F."/>
            <person name="Wakebe H."/>
            <person name="Hishigaki H."/>
            <person name="Watanabe T."/>
            <person name="Sugiyama A."/>
            <person name="Takemoto M."/>
            <person name="Kawakami B."/>
            <person name="Yamazaki M."/>
            <person name="Watanabe K."/>
            <person name="Kumagai A."/>
            <person name="Itakura S."/>
            <person name="Fukuzumi Y."/>
            <person name="Fujimori Y."/>
            <person name="Komiyama M."/>
            <person name="Tashiro H."/>
            <person name="Tanigami A."/>
            <person name="Fujiwara T."/>
            <person name="Ono T."/>
            <person name="Yamada K."/>
            <person name="Fujii Y."/>
            <person name="Ozaki K."/>
            <person name="Hirao M."/>
            <person name="Ohmori Y."/>
            <person name="Kawabata A."/>
            <person name="Hikiji T."/>
            <person name="Kobatake N."/>
            <person name="Inagaki H."/>
            <person name="Ikema Y."/>
            <person name="Okamoto S."/>
            <person name="Okitani R."/>
            <person name="Kawakami T."/>
            <person name="Noguchi S."/>
            <person name="Itoh T."/>
            <person name="Shigeta K."/>
            <person name="Senba T."/>
            <person name="Matsumura K."/>
            <person name="Nakajima Y."/>
            <person name="Mizuno T."/>
            <person name="Morinaga M."/>
            <person name="Sasaki M."/>
            <person name="Togashi T."/>
            <person name="Oyama M."/>
            <person name="Hata H."/>
            <person name="Watanabe M."/>
            <person name="Komatsu T."/>
            <person name="Mizushima-Sugano J."/>
            <person name="Satoh T."/>
            <person name="Shirai Y."/>
            <person name="Takahashi Y."/>
            <person name="Nakagawa K."/>
            <person name="Okumura K."/>
            <person name="Nagase T."/>
            <person name="Nomura N."/>
            <person name="Kikuchi H."/>
            <person name="Masuho Y."/>
            <person name="Yamashita R."/>
            <person name="Nakai K."/>
            <person name="Yada T."/>
            <person name="Nakamura Y."/>
            <person name="Ohara O."/>
            <person name="Isogai T."/>
            <person name="Sugano S."/>
        </authorList>
    </citation>
    <scope>NUCLEOTIDE SEQUENCE [LARGE SCALE MRNA]</scope>
    <source>
        <tissue>Cerebellum</tissue>
    </source>
</reference>
<reference key="2">
    <citation type="journal article" date="2004" name="Nature">
        <title>The sequence and analysis of duplication-rich human chromosome 16.</title>
        <authorList>
            <person name="Martin J."/>
            <person name="Han C."/>
            <person name="Gordon L.A."/>
            <person name="Terry A."/>
            <person name="Prabhakar S."/>
            <person name="She X."/>
            <person name="Xie G."/>
            <person name="Hellsten U."/>
            <person name="Chan Y.M."/>
            <person name="Altherr M."/>
            <person name="Couronne O."/>
            <person name="Aerts A."/>
            <person name="Bajorek E."/>
            <person name="Black S."/>
            <person name="Blumer H."/>
            <person name="Branscomb E."/>
            <person name="Brown N.C."/>
            <person name="Bruno W.J."/>
            <person name="Buckingham J.M."/>
            <person name="Callen D.F."/>
            <person name="Campbell C.S."/>
            <person name="Campbell M.L."/>
            <person name="Campbell E.W."/>
            <person name="Caoile C."/>
            <person name="Challacombe J.F."/>
            <person name="Chasteen L.A."/>
            <person name="Chertkov O."/>
            <person name="Chi H.C."/>
            <person name="Christensen M."/>
            <person name="Clark L.M."/>
            <person name="Cohn J.D."/>
            <person name="Denys M."/>
            <person name="Detter J.C."/>
            <person name="Dickson M."/>
            <person name="Dimitrijevic-Bussod M."/>
            <person name="Escobar J."/>
            <person name="Fawcett J.J."/>
            <person name="Flowers D."/>
            <person name="Fotopulos D."/>
            <person name="Glavina T."/>
            <person name="Gomez M."/>
            <person name="Gonzales E."/>
            <person name="Goodstein D."/>
            <person name="Goodwin L.A."/>
            <person name="Grady D.L."/>
            <person name="Grigoriev I."/>
            <person name="Groza M."/>
            <person name="Hammon N."/>
            <person name="Hawkins T."/>
            <person name="Haydu L."/>
            <person name="Hildebrand C.E."/>
            <person name="Huang W."/>
            <person name="Israni S."/>
            <person name="Jett J."/>
            <person name="Jewett P.B."/>
            <person name="Kadner K."/>
            <person name="Kimball H."/>
            <person name="Kobayashi A."/>
            <person name="Krawczyk M.-C."/>
            <person name="Leyba T."/>
            <person name="Longmire J.L."/>
            <person name="Lopez F."/>
            <person name="Lou Y."/>
            <person name="Lowry S."/>
            <person name="Ludeman T."/>
            <person name="Manohar C.F."/>
            <person name="Mark G.A."/>
            <person name="McMurray K.L."/>
            <person name="Meincke L.J."/>
            <person name="Morgan J."/>
            <person name="Moyzis R.K."/>
            <person name="Mundt M.O."/>
            <person name="Munk A.C."/>
            <person name="Nandkeshwar R.D."/>
            <person name="Pitluck S."/>
            <person name="Pollard M."/>
            <person name="Predki P."/>
            <person name="Parson-Quintana B."/>
            <person name="Ramirez L."/>
            <person name="Rash S."/>
            <person name="Retterer J."/>
            <person name="Ricke D.O."/>
            <person name="Robinson D.L."/>
            <person name="Rodriguez A."/>
            <person name="Salamov A."/>
            <person name="Saunders E.H."/>
            <person name="Scott D."/>
            <person name="Shough T."/>
            <person name="Stallings R.L."/>
            <person name="Stalvey M."/>
            <person name="Sutherland R.D."/>
            <person name="Tapia R."/>
            <person name="Tesmer J.G."/>
            <person name="Thayer N."/>
            <person name="Thompson L.S."/>
            <person name="Tice H."/>
            <person name="Torney D.C."/>
            <person name="Tran-Gyamfi M."/>
            <person name="Tsai M."/>
            <person name="Ulanovsky L.E."/>
            <person name="Ustaszewska A."/>
            <person name="Vo N."/>
            <person name="White P.S."/>
            <person name="Williams A.L."/>
            <person name="Wills P.L."/>
            <person name="Wu J.-R."/>
            <person name="Wu K."/>
            <person name="Yang J."/>
            <person name="DeJong P."/>
            <person name="Bruce D."/>
            <person name="Doggett N.A."/>
            <person name="Deaven L."/>
            <person name="Schmutz J."/>
            <person name="Grimwood J."/>
            <person name="Richardson P."/>
            <person name="Rokhsar D.S."/>
            <person name="Eichler E.E."/>
            <person name="Gilna P."/>
            <person name="Lucas S.M."/>
            <person name="Myers R.M."/>
            <person name="Rubin E.M."/>
            <person name="Pennacchio L.A."/>
        </authorList>
    </citation>
    <scope>NUCLEOTIDE SEQUENCE [LARGE SCALE GENOMIC DNA]</scope>
</reference>
<reference key="3">
    <citation type="journal article" date="2004" name="Genome Res.">
        <title>The status, quality, and expansion of the NIH full-length cDNA project: the Mammalian Gene Collection (MGC).</title>
        <authorList>
            <consortium name="The MGC Project Team"/>
        </authorList>
    </citation>
    <scope>NUCLEOTIDE SEQUENCE [LARGE SCALE MRNA]</scope>
    <source>
        <tissue>Brain</tissue>
        <tissue>Lung</tissue>
    </source>
</reference>
<proteinExistence type="uncertain"/>
<sequence>MFLNGNCLETLKKKEPEGGRRRLSHPGNMGWMRPSQETTPPDRSHHSGFGLFCGDPGPEIEPFSLWVFPQEMVLEIHQLFMDHEYPCHHITSHCTWVAAHWTTSQSCAAWQGCRRACCSTWWKSPAQCTRPTVMSATFETAQEPGPS</sequence>
<organism>
    <name type="scientific">Homo sapiens</name>
    <name type="common">Human</name>
    <dbReference type="NCBI Taxonomy" id="9606"/>
    <lineage>
        <taxon>Eukaryota</taxon>
        <taxon>Metazoa</taxon>
        <taxon>Chordata</taxon>
        <taxon>Craniata</taxon>
        <taxon>Vertebrata</taxon>
        <taxon>Euteleostomi</taxon>
        <taxon>Mammalia</taxon>
        <taxon>Eutheria</taxon>
        <taxon>Euarchontoglires</taxon>
        <taxon>Primates</taxon>
        <taxon>Haplorrhini</taxon>
        <taxon>Catarrhini</taxon>
        <taxon>Hominidae</taxon>
        <taxon>Homo</taxon>
    </lineage>
</organism>
<evidence type="ECO:0000256" key="1">
    <source>
        <dbReference type="SAM" id="MobiDB-lite"/>
    </source>
</evidence>
<evidence type="ECO:0000305" key="2"/>
<feature type="chain" id="PRO_0000282411" description="Putative protein CLUHP3">
    <location>
        <begin position="1"/>
        <end position="147"/>
    </location>
</feature>
<feature type="region of interest" description="Disordered" evidence="1">
    <location>
        <begin position="14"/>
        <end position="47"/>
    </location>
</feature>
<feature type="sequence conflict" description="In Ref. 3; BC000552." evidence="2" ref="3">
    <original>A</original>
    <variation>V</variation>
    <location>
        <position position="116"/>
    </location>
</feature>
<keyword id="KW-1185">Reference proteome</keyword>
<accession>Q96NS8</accession>
<accession>Q9BW88</accession>
<dbReference type="EMBL" id="AK054698">
    <property type="protein sequence ID" value="BAB70796.1"/>
    <property type="molecule type" value="mRNA"/>
</dbReference>
<dbReference type="EMBL" id="AC074050">
    <property type="status" value="NOT_ANNOTATED_CDS"/>
    <property type="molecule type" value="Genomic_DNA"/>
</dbReference>
<dbReference type="EMBL" id="BC000552">
    <property type="status" value="NOT_ANNOTATED_CDS"/>
    <property type="molecule type" value="mRNA"/>
</dbReference>
<dbReference type="EMBL" id="BC021555">
    <property type="status" value="NOT_ANNOTATED_CDS"/>
    <property type="molecule type" value="mRNA"/>
</dbReference>
<dbReference type="FunCoup" id="Q96NS8">
    <property type="interactions" value="1"/>
</dbReference>
<dbReference type="IntAct" id="Q96NS8">
    <property type="interactions" value="2"/>
</dbReference>
<dbReference type="BioMuta" id="HGNC:28447"/>
<dbReference type="jPOST" id="Q96NS8"/>
<dbReference type="AGR" id="HGNC:28447"/>
<dbReference type="GeneCards" id="CLUHP3"/>
<dbReference type="HGNC" id="HGNC:28447">
    <property type="gene designation" value="CLUHP3"/>
</dbReference>
<dbReference type="neXtProt" id="NX_Q96NS8"/>
<dbReference type="InParanoid" id="Q96NS8"/>
<dbReference type="PAN-GO" id="Q96NS8">
    <property type="GO annotations" value="0 GO annotations based on evolutionary models"/>
</dbReference>
<dbReference type="PhylomeDB" id="Q96NS8"/>
<dbReference type="PathwayCommons" id="Q96NS8"/>
<dbReference type="SignaLink" id="Q96NS8"/>
<dbReference type="ChiTaRS" id="CLUHP3">
    <property type="organism name" value="human"/>
</dbReference>
<dbReference type="Pharos" id="Q96NS8">
    <property type="development level" value="Tdark"/>
</dbReference>
<dbReference type="Proteomes" id="UP000005640">
    <property type="component" value="Unplaced"/>
</dbReference>
<dbReference type="RNAct" id="Q96NS8">
    <property type="molecule type" value="protein"/>
</dbReference>
<comment type="interaction">
    <interactant intactId="EBI-25864451">
        <id>Q96NS8</id>
    </interactant>
    <interactant intactId="EBI-351506">
        <id>P06396</id>
        <label>GSN</label>
    </interactant>
    <organismsDiffer>false</organismsDiffer>
    <experiments>3</experiments>
</comment>
<comment type="caution">
    <text evidence="2">Product of a dubious CDS prediction. May be produced at very low levels due to a premature stop codon in the mRNA, leading to nonsense-mediated mRNA decay.</text>
</comment>
<gene>
    <name type="primary">CLUHP3</name>
    <name type="synonym">C16orf67</name>
    <name type="synonym">KIAA0664L3</name>
</gene>